<gene>
    <name type="ordered locus">NMA2126</name>
</gene>
<name>Y2126_NEIMA</name>
<sequence length="91" mass="10072">MNASNWSLYLILCENSAFYCGISPNPQQRLAAHTAGKGAKYTRVFKPVAMRIVAGGMDKGTALRQEIAVKKLTAAQKRKLWEQAEKMPSET</sequence>
<protein>
    <recommendedName>
        <fullName>UPF0213 protein NMA2126</fullName>
    </recommendedName>
</protein>
<comment type="similarity">
    <text evidence="2">Belongs to the UPF0213 family.</text>
</comment>
<feature type="chain" id="PRO_0000161370" description="UPF0213 protein NMA2126">
    <location>
        <begin position="1"/>
        <end position="91"/>
    </location>
</feature>
<feature type="domain" description="GIY-YIG" evidence="1">
    <location>
        <begin position="4"/>
        <end position="83"/>
    </location>
</feature>
<reference key="1">
    <citation type="journal article" date="2000" name="Nature">
        <title>Complete DNA sequence of a serogroup A strain of Neisseria meningitidis Z2491.</title>
        <authorList>
            <person name="Parkhill J."/>
            <person name="Achtman M."/>
            <person name="James K.D."/>
            <person name="Bentley S.D."/>
            <person name="Churcher C.M."/>
            <person name="Klee S.R."/>
            <person name="Morelli G."/>
            <person name="Basham D."/>
            <person name="Brown D."/>
            <person name="Chillingworth T."/>
            <person name="Davies R.M."/>
            <person name="Davis P."/>
            <person name="Devlin K."/>
            <person name="Feltwell T."/>
            <person name="Hamlin N."/>
            <person name="Holroyd S."/>
            <person name="Jagels K."/>
            <person name="Leather S."/>
            <person name="Moule S."/>
            <person name="Mungall K.L."/>
            <person name="Quail M.A."/>
            <person name="Rajandream M.A."/>
            <person name="Rutherford K.M."/>
            <person name="Simmonds M."/>
            <person name="Skelton J."/>
            <person name="Whitehead S."/>
            <person name="Spratt B.G."/>
            <person name="Barrell B.G."/>
        </authorList>
    </citation>
    <scope>NUCLEOTIDE SEQUENCE [LARGE SCALE GENOMIC DNA]</scope>
    <source>
        <strain>DSM 15465 / Z2491</strain>
    </source>
</reference>
<evidence type="ECO:0000255" key="1">
    <source>
        <dbReference type="PROSITE-ProRule" id="PRU00977"/>
    </source>
</evidence>
<evidence type="ECO:0000305" key="2"/>
<accession>Q9JSU8</accession>
<accession>A1ITV4</accession>
<proteinExistence type="inferred from homology"/>
<organism>
    <name type="scientific">Neisseria meningitidis serogroup A / serotype 4A (strain DSM 15465 / Z2491)</name>
    <dbReference type="NCBI Taxonomy" id="122587"/>
    <lineage>
        <taxon>Bacteria</taxon>
        <taxon>Pseudomonadati</taxon>
        <taxon>Pseudomonadota</taxon>
        <taxon>Betaproteobacteria</taxon>
        <taxon>Neisseriales</taxon>
        <taxon>Neisseriaceae</taxon>
        <taxon>Neisseria</taxon>
    </lineage>
</organism>
<dbReference type="EMBL" id="AL157959">
    <property type="protein sequence ID" value="CAM09223.1"/>
    <property type="molecule type" value="Genomic_DNA"/>
</dbReference>
<dbReference type="PIR" id="C81784">
    <property type="entry name" value="C81784"/>
</dbReference>
<dbReference type="RefSeq" id="WP_002245867.1">
    <property type="nucleotide sequence ID" value="NC_003116.1"/>
</dbReference>
<dbReference type="SMR" id="Q9JSU8"/>
<dbReference type="EnsemblBacteria" id="CAM09223">
    <property type="protein sequence ID" value="CAM09223"/>
    <property type="gene ID" value="NMA2126"/>
</dbReference>
<dbReference type="KEGG" id="nma:NMA2126"/>
<dbReference type="HOGENOM" id="CLU_135650_0_2_4"/>
<dbReference type="Proteomes" id="UP000000626">
    <property type="component" value="Chromosome"/>
</dbReference>
<dbReference type="CDD" id="cd10456">
    <property type="entry name" value="GIY-YIG_UPF0213"/>
    <property type="match status" value="1"/>
</dbReference>
<dbReference type="Gene3D" id="3.40.1440.10">
    <property type="entry name" value="GIY-YIG endonuclease"/>
    <property type="match status" value="1"/>
</dbReference>
<dbReference type="InterPro" id="IPR000305">
    <property type="entry name" value="GIY-YIG_endonuc"/>
</dbReference>
<dbReference type="InterPro" id="IPR035901">
    <property type="entry name" value="GIY-YIG_endonuc_sf"/>
</dbReference>
<dbReference type="InterPro" id="IPR050190">
    <property type="entry name" value="UPF0213_domain"/>
</dbReference>
<dbReference type="PANTHER" id="PTHR34477">
    <property type="entry name" value="UPF0213 PROTEIN YHBQ"/>
    <property type="match status" value="1"/>
</dbReference>
<dbReference type="PANTHER" id="PTHR34477:SF1">
    <property type="entry name" value="UPF0213 PROTEIN YHBQ"/>
    <property type="match status" value="1"/>
</dbReference>
<dbReference type="Pfam" id="PF01541">
    <property type="entry name" value="GIY-YIG"/>
    <property type="match status" value="1"/>
</dbReference>
<dbReference type="SUPFAM" id="SSF82771">
    <property type="entry name" value="GIY-YIG endonuclease"/>
    <property type="match status" value="1"/>
</dbReference>
<dbReference type="PROSITE" id="PS50164">
    <property type="entry name" value="GIY_YIG"/>
    <property type="match status" value="1"/>
</dbReference>